<feature type="chain" id="PRO_1000052657" description="Large ribosomal subunit protein uL22">
    <location>
        <begin position="1"/>
        <end position="117"/>
    </location>
</feature>
<comment type="function">
    <text evidence="1">This protein binds specifically to 23S rRNA; its binding is stimulated by other ribosomal proteins, e.g. L4, L17, and L20. It is important during the early stages of 50S assembly. It makes multiple contacts with different domains of the 23S rRNA in the assembled 50S subunit and ribosome (By similarity).</text>
</comment>
<comment type="function">
    <text evidence="1">The globular domain of the protein is located near the polypeptide exit tunnel on the outside of the subunit, while an extended beta-hairpin is found that lines the wall of the exit tunnel in the center of the 70S ribosome.</text>
</comment>
<comment type="subunit">
    <text evidence="1">Part of the 50S ribosomal subunit.</text>
</comment>
<comment type="similarity">
    <text evidence="1">Belongs to the universal ribosomal protein uL22 family.</text>
</comment>
<gene>
    <name evidence="1" type="primary">rplV</name>
    <name type="ordered locus">SAHV_2229</name>
</gene>
<proteinExistence type="inferred from homology"/>
<organism>
    <name type="scientific">Staphylococcus aureus (strain Mu3 / ATCC 700698)</name>
    <dbReference type="NCBI Taxonomy" id="418127"/>
    <lineage>
        <taxon>Bacteria</taxon>
        <taxon>Bacillati</taxon>
        <taxon>Bacillota</taxon>
        <taxon>Bacilli</taxon>
        <taxon>Bacillales</taxon>
        <taxon>Staphylococcaceae</taxon>
        <taxon>Staphylococcus</taxon>
    </lineage>
</organism>
<reference key="1">
    <citation type="journal article" date="2008" name="Antimicrob. Agents Chemother.">
        <title>Mutated response regulator graR is responsible for phenotypic conversion of Staphylococcus aureus from heterogeneous vancomycin-intermediate resistance to vancomycin-intermediate resistance.</title>
        <authorList>
            <person name="Neoh H.-M."/>
            <person name="Cui L."/>
            <person name="Yuzawa H."/>
            <person name="Takeuchi F."/>
            <person name="Matsuo M."/>
            <person name="Hiramatsu K."/>
        </authorList>
    </citation>
    <scope>NUCLEOTIDE SEQUENCE [LARGE SCALE GENOMIC DNA]</scope>
    <source>
        <strain>Mu3 / ATCC 700698</strain>
    </source>
</reference>
<dbReference type="EMBL" id="AP009324">
    <property type="protein sequence ID" value="BAF79112.1"/>
    <property type="molecule type" value="Genomic_DNA"/>
</dbReference>
<dbReference type="RefSeq" id="WP_000387527.1">
    <property type="nucleotide sequence ID" value="NZ_CTYB01000025.1"/>
</dbReference>
<dbReference type="EMDB" id="EMD-21887"/>
<dbReference type="SMR" id="A7X5F6"/>
<dbReference type="GeneID" id="98346557"/>
<dbReference type="KEGG" id="saw:SAHV_2229"/>
<dbReference type="HOGENOM" id="CLU_083987_3_3_9"/>
<dbReference type="GO" id="GO:0022625">
    <property type="term" value="C:cytosolic large ribosomal subunit"/>
    <property type="evidence" value="ECO:0007669"/>
    <property type="project" value="TreeGrafter"/>
</dbReference>
<dbReference type="GO" id="GO:0019843">
    <property type="term" value="F:rRNA binding"/>
    <property type="evidence" value="ECO:0007669"/>
    <property type="project" value="UniProtKB-UniRule"/>
</dbReference>
<dbReference type="GO" id="GO:0003735">
    <property type="term" value="F:structural constituent of ribosome"/>
    <property type="evidence" value="ECO:0007669"/>
    <property type="project" value="InterPro"/>
</dbReference>
<dbReference type="GO" id="GO:0006412">
    <property type="term" value="P:translation"/>
    <property type="evidence" value="ECO:0007669"/>
    <property type="project" value="UniProtKB-UniRule"/>
</dbReference>
<dbReference type="CDD" id="cd00336">
    <property type="entry name" value="Ribosomal_L22"/>
    <property type="match status" value="1"/>
</dbReference>
<dbReference type="FunFam" id="3.90.470.10:FF:000001">
    <property type="entry name" value="50S ribosomal protein L22"/>
    <property type="match status" value="1"/>
</dbReference>
<dbReference type="Gene3D" id="3.90.470.10">
    <property type="entry name" value="Ribosomal protein L22/L17"/>
    <property type="match status" value="1"/>
</dbReference>
<dbReference type="HAMAP" id="MF_01331_B">
    <property type="entry name" value="Ribosomal_uL22_B"/>
    <property type="match status" value="1"/>
</dbReference>
<dbReference type="InterPro" id="IPR001063">
    <property type="entry name" value="Ribosomal_uL22"/>
</dbReference>
<dbReference type="InterPro" id="IPR005727">
    <property type="entry name" value="Ribosomal_uL22_bac/chlpt-type"/>
</dbReference>
<dbReference type="InterPro" id="IPR047867">
    <property type="entry name" value="Ribosomal_uL22_bac/org-type"/>
</dbReference>
<dbReference type="InterPro" id="IPR018260">
    <property type="entry name" value="Ribosomal_uL22_CS"/>
</dbReference>
<dbReference type="InterPro" id="IPR036394">
    <property type="entry name" value="Ribosomal_uL22_sf"/>
</dbReference>
<dbReference type="NCBIfam" id="TIGR01044">
    <property type="entry name" value="rplV_bact"/>
    <property type="match status" value="1"/>
</dbReference>
<dbReference type="PANTHER" id="PTHR13501">
    <property type="entry name" value="CHLOROPLAST 50S RIBOSOMAL PROTEIN L22-RELATED"/>
    <property type="match status" value="1"/>
</dbReference>
<dbReference type="PANTHER" id="PTHR13501:SF8">
    <property type="entry name" value="LARGE RIBOSOMAL SUBUNIT PROTEIN UL22M"/>
    <property type="match status" value="1"/>
</dbReference>
<dbReference type="Pfam" id="PF00237">
    <property type="entry name" value="Ribosomal_L22"/>
    <property type="match status" value="1"/>
</dbReference>
<dbReference type="SUPFAM" id="SSF54843">
    <property type="entry name" value="Ribosomal protein L22"/>
    <property type="match status" value="1"/>
</dbReference>
<dbReference type="PROSITE" id="PS00464">
    <property type="entry name" value="RIBOSOMAL_L22"/>
    <property type="match status" value="1"/>
</dbReference>
<keyword id="KW-0687">Ribonucleoprotein</keyword>
<keyword id="KW-0689">Ribosomal protein</keyword>
<keyword id="KW-0694">RNA-binding</keyword>
<keyword id="KW-0699">rRNA-binding</keyword>
<name>RL22_STAA1</name>
<sequence>MEAKAVARTIRIAPRKVRLVLDLIRGKNAAEAIAILKLTNKASSPVIEKVLMSALANAEHNYDMNTDELVVKEAYANEGPTLKRFRPRAQGRASAINKRTSHITIVVSDGKEEAKEA</sequence>
<accession>A7X5F6</accession>
<evidence type="ECO:0000255" key="1">
    <source>
        <dbReference type="HAMAP-Rule" id="MF_01331"/>
    </source>
</evidence>
<evidence type="ECO:0000305" key="2"/>
<protein>
    <recommendedName>
        <fullName evidence="1">Large ribosomal subunit protein uL22</fullName>
    </recommendedName>
    <alternativeName>
        <fullName evidence="2">50S ribosomal protein L22</fullName>
    </alternativeName>
</protein>